<protein>
    <recommendedName>
        <fullName evidence="2">FMR1-interacting protein NUFIP1</fullName>
    </recommendedName>
    <alternativeName>
        <fullName>Nuclear FMRP-interacting protein 1</fullName>
    </alternativeName>
</protein>
<gene>
    <name evidence="4" type="primary">Nufip1</name>
</gene>
<accession>Q641W3</accession>
<keyword id="KW-0479">Metal-binding</keyword>
<keyword id="KW-0539">Nucleus</keyword>
<keyword id="KW-0597">Phosphoprotein</keyword>
<keyword id="KW-1185">Reference proteome</keyword>
<keyword id="KW-0694">RNA-binding</keyword>
<keyword id="KW-0862">Zinc</keyword>
<keyword id="KW-0863">Zinc-finger</keyword>
<reference key="1">
    <citation type="journal article" date="2004" name="Genome Res.">
        <title>The status, quality, and expansion of the NIH full-length cDNA project: the Mammalian Gene Collection (MGC).</title>
        <authorList>
            <consortium name="The MGC Project Team"/>
        </authorList>
    </citation>
    <scope>NUCLEOTIDE SEQUENCE [LARGE SCALE MRNA]</scope>
    <source>
        <tissue>Testis</tissue>
    </source>
</reference>
<reference key="2">
    <citation type="journal article" date="2012" name="Nat. Commun.">
        <title>Quantitative maps of protein phosphorylation sites across 14 different rat organs and tissues.</title>
        <authorList>
            <person name="Lundby A."/>
            <person name="Secher A."/>
            <person name="Lage K."/>
            <person name="Nordsborg N.B."/>
            <person name="Dmytriyev A."/>
            <person name="Lundby C."/>
            <person name="Olsen J.V."/>
        </authorList>
    </citation>
    <scope>IDENTIFICATION BY MASS SPECTROMETRY [LARGE SCALE ANALYSIS]</scope>
</reference>
<sequence length="486" mass="55090">MAEPTPAGWPSAPELTPAPGTPSEAAPPQDNWVYWAMLPPPPPPLSSPVAGTEPCQKEQPHVEPQPTSGAFPPFDAQILPAAQPPFDAQAPPDGQSQFNDQQAWNFQASTPWYWGLSPNGFPTYNTSFHSPATHSYFPQSYANYNDFNLPQNRKQKKKKRKEPVFHFFCDTCDRGFKNQEKYDIHMSEHKKCPEVDCSFSAHEKIVQFHWRNMHAPGMKKIKLDTPEDIARWREERRKNYPTLANIERKKLLQLEKEKRGEVLTTTQYGKMKGMSRHSQMAKIRSPGKHYKWKSGGARQRAVLGLGNRARDLKPEIPTKVNVDPLGVLIHSDSESDKDEKSQRAIVPKEVTPALCSLMSSYGNVSGSESEPEEAPIKTEAEVLAENRVLPSSPPKSPRHNVRTTARTVLRAKWKAQRSGLRKITLKQKKSPCHPLFEPRTRHPHLLEMLLAPDIRHERNVILQCVRYIIKKDFFGLTAGSVKTEDV</sequence>
<dbReference type="EMBL" id="BC082111">
    <property type="protein sequence ID" value="AAH82111.1"/>
    <property type="molecule type" value="mRNA"/>
</dbReference>
<dbReference type="RefSeq" id="NP_001007759.1">
    <property type="nucleotide sequence ID" value="NM_001007758.1"/>
</dbReference>
<dbReference type="FunCoup" id="Q641W3">
    <property type="interactions" value="3408"/>
</dbReference>
<dbReference type="STRING" id="10116.ENSRNOP00000001366"/>
<dbReference type="GlyGen" id="Q641W3">
    <property type="glycosylation" value="3 sites"/>
</dbReference>
<dbReference type="iPTMnet" id="Q641W3"/>
<dbReference type="PhosphoSitePlus" id="Q641W3"/>
<dbReference type="PaxDb" id="10116-ENSRNOP00000001366"/>
<dbReference type="Ensembl" id="ENSRNOT00000001366.6">
    <property type="protein sequence ID" value="ENSRNOP00000001366.3"/>
    <property type="gene ID" value="ENSRNOG00000001033.6"/>
</dbReference>
<dbReference type="GeneID" id="364430"/>
<dbReference type="KEGG" id="rno:364430"/>
<dbReference type="UCSC" id="RGD:1359440">
    <property type="organism name" value="rat"/>
</dbReference>
<dbReference type="AGR" id="RGD:1359440"/>
<dbReference type="CTD" id="26747"/>
<dbReference type="RGD" id="1359440">
    <property type="gene designation" value="Nufip1"/>
</dbReference>
<dbReference type="eggNOG" id="ENOG502QPTB">
    <property type="taxonomic scope" value="Eukaryota"/>
</dbReference>
<dbReference type="GeneTree" id="ENSGT00390000003758"/>
<dbReference type="HOGENOM" id="CLU_038059_0_0_1"/>
<dbReference type="InParanoid" id="Q641W3"/>
<dbReference type="OMA" id="WMFWAML"/>
<dbReference type="OrthoDB" id="273070at2759"/>
<dbReference type="PhylomeDB" id="Q641W3"/>
<dbReference type="TreeFam" id="TF329804"/>
<dbReference type="PRO" id="PR:Q641W3"/>
<dbReference type="Proteomes" id="UP000002494">
    <property type="component" value="Chromosome 15"/>
</dbReference>
<dbReference type="Bgee" id="ENSRNOG00000001033">
    <property type="expression patterns" value="Expressed in Ammon's horn and 20 other cell types or tissues"/>
</dbReference>
<dbReference type="GO" id="GO:0001650">
    <property type="term" value="C:fibrillar center"/>
    <property type="evidence" value="ECO:0007669"/>
    <property type="project" value="Ensembl"/>
</dbReference>
<dbReference type="GO" id="GO:0016363">
    <property type="term" value="C:nuclear matrix"/>
    <property type="evidence" value="ECO:0000266"/>
    <property type="project" value="RGD"/>
</dbReference>
<dbReference type="GO" id="GO:0005634">
    <property type="term" value="C:nucleus"/>
    <property type="evidence" value="ECO:0000266"/>
    <property type="project" value="RGD"/>
</dbReference>
<dbReference type="GO" id="GO:0005726">
    <property type="term" value="C:perichromatin fibrils"/>
    <property type="evidence" value="ECO:0000266"/>
    <property type="project" value="RGD"/>
</dbReference>
<dbReference type="GO" id="GO:0070761">
    <property type="term" value="C:pre-snoRNP complex"/>
    <property type="evidence" value="ECO:0000266"/>
    <property type="project" value="RGD"/>
</dbReference>
<dbReference type="GO" id="GO:0048786">
    <property type="term" value="C:presynaptic active zone"/>
    <property type="evidence" value="ECO:0000314"/>
    <property type="project" value="HGNC-UCL"/>
</dbReference>
<dbReference type="GO" id="GO:0032991">
    <property type="term" value="C:protein-containing complex"/>
    <property type="evidence" value="ECO:0000266"/>
    <property type="project" value="RGD"/>
</dbReference>
<dbReference type="GO" id="GO:0045202">
    <property type="term" value="C:synapse"/>
    <property type="evidence" value="ECO:0000266"/>
    <property type="project" value="RGD"/>
</dbReference>
<dbReference type="GO" id="GO:0008023">
    <property type="term" value="C:transcription elongation factor complex"/>
    <property type="evidence" value="ECO:0000266"/>
    <property type="project" value="RGD"/>
</dbReference>
<dbReference type="GO" id="GO:0051117">
    <property type="term" value="F:ATPase binding"/>
    <property type="evidence" value="ECO:0000266"/>
    <property type="project" value="RGD"/>
</dbReference>
<dbReference type="GO" id="GO:0042802">
    <property type="term" value="F:identical protein binding"/>
    <property type="evidence" value="ECO:0000266"/>
    <property type="project" value="RGD"/>
</dbReference>
<dbReference type="GO" id="GO:0030674">
    <property type="term" value="F:protein-macromolecule adaptor activity"/>
    <property type="evidence" value="ECO:0000266"/>
    <property type="project" value="RGD"/>
</dbReference>
<dbReference type="GO" id="GO:0003723">
    <property type="term" value="F:RNA binding"/>
    <property type="evidence" value="ECO:0000266"/>
    <property type="project" value="RGD"/>
</dbReference>
<dbReference type="GO" id="GO:0030515">
    <property type="term" value="F:snoRNA binding"/>
    <property type="evidence" value="ECO:0007669"/>
    <property type="project" value="Ensembl"/>
</dbReference>
<dbReference type="GO" id="GO:0008270">
    <property type="term" value="F:zinc ion binding"/>
    <property type="evidence" value="ECO:0007669"/>
    <property type="project" value="UniProtKB-KW"/>
</dbReference>
<dbReference type="GO" id="GO:0000492">
    <property type="term" value="P:box C/D snoRNP assembly"/>
    <property type="evidence" value="ECO:0000266"/>
    <property type="project" value="RGD"/>
</dbReference>
<dbReference type="GO" id="GO:0045944">
    <property type="term" value="P:positive regulation of transcription by RNA polymerase II"/>
    <property type="evidence" value="ECO:0000266"/>
    <property type="project" value="RGD"/>
</dbReference>
<dbReference type="InterPro" id="IPR039136">
    <property type="entry name" value="NUFIP1-like"/>
</dbReference>
<dbReference type="InterPro" id="IPR019496">
    <property type="entry name" value="NUFIP1_cons_dom"/>
</dbReference>
<dbReference type="InterPro" id="IPR013087">
    <property type="entry name" value="Znf_C2H2_type"/>
</dbReference>
<dbReference type="PANTHER" id="PTHR13309:SF0">
    <property type="entry name" value="FMR1-INTERACTING PROTEIN NUFIP1"/>
    <property type="match status" value="1"/>
</dbReference>
<dbReference type="PANTHER" id="PTHR13309">
    <property type="entry name" value="NUCLEAR FRAGILE X MENTAL RETARDATION PROTEIN INTERACTING PROTEIN 1"/>
    <property type="match status" value="1"/>
</dbReference>
<dbReference type="Pfam" id="PF10453">
    <property type="entry name" value="NUFIP1"/>
    <property type="match status" value="1"/>
</dbReference>
<dbReference type="SMART" id="SM00355">
    <property type="entry name" value="ZnF_C2H2"/>
    <property type="match status" value="2"/>
</dbReference>
<dbReference type="PROSITE" id="PS00028">
    <property type="entry name" value="ZINC_FINGER_C2H2_1"/>
    <property type="match status" value="1"/>
</dbReference>
<evidence type="ECO:0000250" key="1"/>
<evidence type="ECO:0000250" key="2">
    <source>
        <dbReference type="UniProtKB" id="Q9UHK0"/>
    </source>
</evidence>
<evidence type="ECO:0000256" key="3">
    <source>
        <dbReference type="SAM" id="MobiDB-lite"/>
    </source>
</evidence>
<evidence type="ECO:0000312" key="4">
    <source>
        <dbReference type="RGD" id="1359440"/>
    </source>
</evidence>
<name>NUFP1_RAT</name>
<feature type="chain" id="PRO_0000245520" description="FMR1-interacting protein NUFIP1">
    <location>
        <begin position="1"/>
        <end position="486"/>
    </location>
</feature>
<feature type="zinc finger region" description="C2H2-type">
    <location>
        <begin position="167"/>
        <end position="189"/>
    </location>
</feature>
<feature type="region of interest" description="Disordered" evidence="3">
    <location>
        <begin position="1"/>
        <end position="71"/>
    </location>
</feature>
<feature type="short sequence motif" description="Bipartite nuclear localization signal" evidence="1">
    <location>
        <begin position="236"/>
        <end position="252"/>
    </location>
</feature>
<feature type="modified residue" description="Phosphoserine" evidence="2">
    <location>
        <position position="331"/>
    </location>
</feature>
<feature type="modified residue" description="Phosphoserine" evidence="2">
    <location>
        <position position="333"/>
    </location>
</feature>
<feature type="modified residue" description="Phosphoserine" evidence="2">
    <location>
        <position position="335"/>
    </location>
</feature>
<feature type="modified residue" description="Phosphoserine" evidence="2">
    <location>
        <position position="396"/>
    </location>
</feature>
<proteinExistence type="evidence at protein level"/>
<comment type="function">
    <text evidence="1">Binds RNA.</text>
</comment>
<comment type="subunit">
    <text evidence="2">Interacts with FMR1 (By similarity). Interacts with ZNHIT3 (By similarity). Interacts with NOP2, NOP56 and RUVBL1 (By similarity).</text>
</comment>
<comment type="subcellular location">
    <subcellularLocation>
        <location evidence="1">Nucleus</location>
    </subcellularLocation>
    <text evidence="1">Distributed in the nucleus in a dot-like pattern.</text>
</comment>
<organism>
    <name type="scientific">Rattus norvegicus</name>
    <name type="common">Rat</name>
    <dbReference type="NCBI Taxonomy" id="10116"/>
    <lineage>
        <taxon>Eukaryota</taxon>
        <taxon>Metazoa</taxon>
        <taxon>Chordata</taxon>
        <taxon>Craniata</taxon>
        <taxon>Vertebrata</taxon>
        <taxon>Euteleostomi</taxon>
        <taxon>Mammalia</taxon>
        <taxon>Eutheria</taxon>
        <taxon>Euarchontoglires</taxon>
        <taxon>Glires</taxon>
        <taxon>Rodentia</taxon>
        <taxon>Myomorpha</taxon>
        <taxon>Muroidea</taxon>
        <taxon>Muridae</taxon>
        <taxon>Murinae</taxon>
        <taxon>Rattus</taxon>
    </lineage>
</organism>